<comment type="function">
    <text evidence="2">Protease involved in the C-terminal processing of HycE, the large subunit of hydrogenase 3.</text>
</comment>
<comment type="catalytic activity">
    <reaction evidence="2">
        <text>This enzyme specifically removes a 32-amino acid peptide from the C-terminus of the precursor of the large subunit of E.coli hydrogenase 3 by cleavage at the C-terminal side of Arg-537.</text>
        <dbReference type="EC" id="3.4.23.51"/>
    </reaction>
</comment>
<comment type="subunit">
    <text evidence="3">Monomer.</text>
</comment>
<comment type="interaction">
    <interactant intactId="EBI-552628">
        <id>P0AEV9</id>
    </interactant>
    <interactant intactId="EBI-542683">
        <id>P0AFG8</id>
        <label>aceE</label>
    </interactant>
    <organismsDiffer>false</organismsDiffer>
    <experiments>2</experiments>
</comment>
<comment type="similarity">
    <text evidence="5">Belongs to the peptidase A31 family.</text>
</comment>
<dbReference type="EC" id="3.4.23.51" evidence="2"/>
<dbReference type="EMBL" id="X17506">
    <property type="protein sequence ID" value="CAA35554.1"/>
    <property type="molecule type" value="Genomic_DNA"/>
</dbReference>
<dbReference type="EMBL" id="U29579">
    <property type="protein sequence ID" value="AAA69227.1"/>
    <property type="molecule type" value="Genomic_DNA"/>
</dbReference>
<dbReference type="EMBL" id="U00096">
    <property type="protein sequence ID" value="AAC75759.1"/>
    <property type="molecule type" value="Genomic_DNA"/>
</dbReference>
<dbReference type="EMBL" id="AP009048">
    <property type="protein sequence ID" value="BAE76794.1"/>
    <property type="molecule type" value="Genomic_DNA"/>
</dbReference>
<dbReference type="PIR" id="S67469">
    <property type="entry name" value="S67469"/>
</dbReference>
<dbReference type="RefSeq" id="NP_417197.1">
    <property type="nucleotide sequence ID" value="NC_000913.3"/>
</dbReference>
<dbReference type="RefSeq" id="WP_000132961.1">
    <property type="nucleotide sequence ID" value="NZ_SSZK01000017.1"/>
</dbReference>
<dbReference type="PDB" id="2E85">
    <property type="method" value="X-ray"/>
    <property type="resolution" value="1.70 A"/>
    <property type="chains" value="A/B=1-156"/>
</dbReference>
<dbReference type="PDB" id="2I8L">
    <property type="method" value="NMR"/>
    <property type="chains" value="A=1-156"/>
</dbReference>
<dbReference type="PDBsum" id="2E85"/>
<dbReference type="PDBsum" id="2I8L"/>
<dbReference type="SMR" id="P0AEV9"/>
<dbReference type="BioGRID" id="4261309">
    <property type="interactions" value="19"/>
</dbReference>
<dbReference type="DIP" id="DIP-48019N"/>
<dbReference type="FunCoup" id="P0AEV9">
    <property type="interactions" value="26"/>
</dbReference>
<dbReference type="IntAct" id="P0AEV9">
    <property type="interactions" value="9"/>
</dbReference>
<dbReference type="STRING" id="511145.b2717"/>
<dbReference type="MEROPS" id="A31.003"/>
<dbReference type="jPOST" id="P0AEV9"/>
<dbReference type="PaxDb" id="511145-b2717"/>
<dbReference type="EnsemblBacteria" id="AAC75759">
    <property type="protein sequence ID" value="AAC75759"/>
    <property type="gene ID" value="b2717"/>
</dbReference>
<dbReference type="GeneID" id="93779291"/>
<dbReference type="GeneID" id="947428"/>
<dbReference type="KEGG" id="ecj:JW2687"/>
<dbReference type="KEGG" id="eco:b2717"/>
<dbReference type="KEGG" id="ecoc:C3026_14950"/>
<dbReference type="PATRIC" id="fig|1411691.4.peg.4024"/>
<dbReference type="EchoBASE" id="EB3177"/>
<dbReference type="eggNOG" id="COG0680">
    <property type="taxonomic scope" value="Bacteria"/>
</dbReference>
<dbReference type="HOGENOM" id="CLU_099037_4_0_6"/>
<dbReference type="InParanoid" id="P0AEV9"/>
<dbReference type="OMA" id="EMCAANP"/>
<dbReference type="OrthoDB" id="1723372at2"/>
<dbReference type="PhylomeDB" id="P0AEV9"/>
<dbReference type="BioCyc" id="EcoCyc:G7414-MONOMER"/>
<dbReference type="BioCyc" id="MetaCyc:G7414-MONOMER"/>
<dbReference type="BRENDA" id="3.4.23.51">
    <property type="organism ID" value="2026"/>
</dbReference>
<dbReference type="EvolutionaryTrace" id="P0AEV9"/>
<dbReference type="PRO" id="PR:P0AEV9"/>
<dbReference type="Proteomes" id="UP000000625">
    <property type="component" value="Chromosome"/>
</dbReference>
<dbReference type="GO" id="GO:0004190">
    <property type="term" value="F:aspartic-type endopeptidase activity"/>
    <property type="evidence" value="ECO:0007669"/>
    <property type="project" value="UniProtKB-KW"/>
</dbReference>
<dbReference type="GO" id="GO:0004175">
    <property type="term" value="F:endopeptidase activity"/>
    <property type="evidence" value="ECO:0000314"/>
    <property type="project" value="EcoCyc"/>
</dbReference>
<dbReference type="GO" id="GO:0008047">
    <property type="term" value="F:enzyme activator activity"/>
    <property type="evidence" value="ECO:0007669"/>
    <property type="project" value="InterPro"/>
</dbReference>
<dbReference type="GO" id="GO:0046872">
    <property type="term" value="F:metal ion binding"/>
    <property type="evidence" value="ECO:0007669"/>
    <property type="project" value="UniProtKB-KW"/>
</dbReference>
<dbReference type="GO" id="GO:0016485">
    <property type="term" value="P:protein processing"/>
    <property type="evidence" value="ECO:0000314"/>
    <property type="project" value="EcoCyc"/>
</dbReference>
<dbReference type="CDD" id="cd06067">
    <property type="entry name" value="H2MP_MemB-H2evol"/>
    <property type="match status" value="1"/>
</dbReference>
<dbReference type="FunFam" id="3.40.50.1450:FF:000003">
    <property type="entry name" value="Hydrogenase 3 maturation endopeptidase HyCI"/>
    <property type="match status" value="1"/>
</dbReference>
<dbReference type="Gene3D" id="3.40.50.1450">
    <property type="entry name" value="HybD-like"/>
    <property type="match status" value="1"/>
</dbReference>
<dbReference type="InterPro" id="IPR004420">
    <property type="entry name" value="Pept_A31_hyd_mat_HycI"/>
</dbReference>
<dbReference type="InterPro" id="IPR023430">
    <property type="entry name" value="Pept_HybD-like_dom_sf"/>
</dbReference>
<dbReference type="InterPro" id="IPR000671">
    <property type="entry name" value="Peptidase_A31"/>
</dbReference>
<dbReference type="NCBIfam" id="TIGR00142">
    <property type="entry name" value="hycI"/>
    <property type="match status" value="1"/>
</dbReference>
<dbReference type="NCBIfam" id="TIGR00072">
    <property type="entry name" value="hydrog_prot"/>
    <property type="match status" value="1"/>
</dbReference>
<dbReference type="PANTHER" id="PTHR30302">
    <property type="entry name" value="HYDROGENASE 1 MATURATION PROTEASE"/>
    <property type="match status" value="1"/>
</dbReference>
<dbReference type="PANTHER" id="PTHR30302:SF4">
    <property type="entry name" value="HYDROGENASE 3 MATURATION PROTEASE"/>
    <property type="match status" value="1"/>
</dbReference>
<dbReference type="Pfam" id="PF01750">
    <property type="entry name" value="HycI"/>
    <property type="match status" value="1"/>
</dbReference>
<dbReference type="PRINTS" id="PR00446">
    <property type="entry name" value="HYDRGNUPTAKE"/>
</dbReference>
<dbReference type="SUPFAM" id="SSF53163">
    <property type="entry name" value="HybD-like"/>
    <property type="match status" value="1"/>
</dbReference>
<proteinExistence type="evidence at protein level"/>
<reference key="1">
    <citation type="journal article" date="1995" name="Eur. J. Biochem.">
        <title>Characterisation of a protease from Escherichia coli involved in hydrogenase maturation.</title>
        <authorList>
            <person name="Rossmann R."/>
            <person name="Maier T."/>
            <person name="Lottspeich F."/>
            <person name="Boeck A."/>
        </authorList>
    </citation>
    <scope>NUCLEOTIDE SEQUENCE [GENOMIC DNA]</scope>
    <scope>PROTEIN SEQUENCE OF 2-37 AND 66-84</scope>
    <source>
        <strain>K12 / MC4100 / ATCC 35695 / DSM 6574</strain>
    </source>
</reference>
<reference key="2">
    <citation type="journal article" date="1997" name="Science">
        <title>The complete genome sequence of Escherichia coli K-12.</title>
        <authorList>
            <person name="Blattner F.R."/>
            <person name="Plunkett G. III"/>
            <person name="Bloch C.A."/>
            <person name="Perna N.T."/>
            <person name="Burland V."/>
            <person name="Riley M."/>
            <person name="Collado-Vides J."/>
            <person name="Glasner J.D."/>
            <person name="Rode C.K."/>
            <person name="Mayhew G.F."/>
            <person name="Gregor J."/>
            <person name="Davis N.W."/>
            <person name="Kirkpatrick H.A."/>
            <person name="Goeden M.A."/>
            <person name="Rose D.J."/>
            <person name="Mau B."/>
            <person name="Shao Y."/>
        </authorList>
    </citation>
    <scope>NUCLEOTIDE SEQUENCE [LARGE SCALE GENOMIC DNA]</scope>
    <source>
        <strain>K12 / MG1655 / ATCC 47076</strain>
    </source>
</reference>
<reference key="3">
    <citation type="journal article" date="2006" name="Mol. Syst. Biol.">
        <title>Highly accurate genome sequences of Escherichia coli K-12 strains MG1655 and W3110.</title>
        <authorList>
            <person name="Hayashi K."/>
            <person name="Morooka N."/>
            <person name="Yamamoto Y."/>
            <person name="Fujita K."/>
            <person name="Isono K."/>
            <person name="Choi S."/>
            <person name="Ohtsubo E."/>
            <person name="Baba T."/>
            <person name="Wanner B.L."/>
            <person name="Mori H."/>
            <person name="Horiuchi T."/>
        </authorList>
    </citation>
    <scope>NUCLEOTIDE SEQUENCE [LARGE SCALE GENOMIC DNA]</scope>
    <source>
        <strain>K12 / W3110 / ATCC 27325 / DSM 5911</strain>
    </source>
</reference>
<reference key="4">
    <citation type="journal article" date="2000" name="Eur. J. Biochem.">
        <title>Nickel serves as a substrate recognition motif for the endopeptidase involved in hydrogenase maturation.</title>
        <authorList>
            <person name="Theodoratou E."/>
            <person name="Paschos A."/>
            <person name="Magalon A."/>
            <person name="Fritsche E."/>
            <person name="Huber R."/>
            <person name="Boeck A."/>
        </authorList>
    </citation>
    <scope>MUTAGENESIS OF ASP-16; ASP-62 AND HIS-90</scope>
    <scope>INVOLVEMENT OF NICKEL ION BINDING IN PROTEASE ACTIVITY</scope>
    <scope>FUNCTION</scope>
    <scope>CATALYTIC ACTIVITY</scope>
    <source>
        <strain>K12 / JM109 / ATCC 53323</strain>
    </source>
</reference>
<reference key="5">
    <citation type="journal article" date="2007" name="J. Biol. Chem.">
        <title>Solution structure and backbone dynamics of an endopeptidase HycI from Escherichia coli: implications for mechanism of the [NiFe] hydrogenase maturation.</title>
        <authorList>
            <person name="Yang F."/>
            <person name="Hu W."/>
            <person name="Xu H."/>
            <person name="Li C."/>
            <person name="Xia B."/>
            <person name="Jin C."/>
        </authorList>
    </citation>
    <scope>STRUCTURE BY NMR</scope>
</reference>
<reference key="6">
    <citation type="journal article" date="2009" name="Biochem. Biophys. Res. Commun.">
        <title>Crystal structure of hydrogenase maturating endopeptidase HycI from Escherichia coli.</title>
        <authorList>
            <person name="Kumarevel T."/>
            <person name="Tanaka T."/>
            <person name="Bessho Y."/>
            <person name="Shinkai A."/>
            <person name="Yokoyama S."/>
        </authorList>
    </citation>
    <scope>X-RAY CRYSTALLOGRAPHY (1.7 ANGSTROMS) OF 2-156 IN COMPLEX WITH CALCIUM IONS</scope>
</reference>
<sequence>MTDVLLCVGNSMMGDDGAGPLLAEKCAAAPKGNWVVIDGGSAPENDIVAIRELRPTRLLIVDATDMGLNPGEIRIIDPDDIAEMFMMTTHNMPLNYLIDQLKEDIGEVIFLGIQPDIVGFYYPMTQPIKDAVETVYQRLEGWEGNGGFAQLAVEEE</sequence>
<name>HYCI_ECOLI</name>
<organism>
    <name type="scientific">Escherichia coli (strain K12)</name>
    <dbReference type="NCBI Taxonomy" id="83333"/>
    <lineage>
        <taxon>Bacteria</taxon>
        <taxon>Pseudomonadati</taxon>
        <taxon>Pseudomonadota</taxon>
        <taxon>Gammaproteobacteria</taxon>
        <taxon>Enterobacterales</taxon>
        <taxon>Enterobacteriaceae</taxon>
        <taxon>Escherichia</taxon>
    </lineage>
</organism>
<protein>
    <recommendedName>
        <fullName>Hydrogenase 3 maturation protease</fullName>
        <ecNumber evidence="2">3.4.23.51</ecNumber>
    </recommendedName>
    <alternativeName>
        <fullName>HycI protease</fullName>
    </alternativeName>
</protein>
<accession>P0AEV9</accession>
<accession>Q2MAB2</accession>
<accession>Q57451</accession>
<feature type="initiator methionine" description="Removed" evidence="4">
    <location>
        <position position="1"/>
    </location>
</feature>
<feature type="chain" id="PRO_0000201944" description="Hydrogenase 3 maturation protease">
    <location>
        <begin position="2"/>
        <end position="156"/>
    </location>
</feature>
<feature type="binding site" evidence="1">
    <location>
        <position position="16"/>
    </location>
    <ligand>
        <name>Ni(2+)</name>
        <dbReference type="ChEBI" id="CHEBI:49786"/>
    </ligand>
</feature>
<feature type="binding site" evidence="1">
    <location>
        <position position="62"/>
    </location>
    <ligand>
        <name>Ni(2+)</name>
        <dbReference type="ChEBI" id="CHEBI:49786"/>
    </ligand>
</feature>
<feature type="binding site" evidence="1">
    <location>
        <position position="90"/>
    </location>
    <ligand>
        <name>Ni(2+)</name>
        <dbReference type="ChEBI" id="CHEBI:49786"/>
    </ligand>
</feature>
<feature type="mutagenesis site" description="No protease activity." evidence="2">
    <original>D</original>
    <variation>N</variation>
    <location>
        <position position="16"/>
    </location>
</feature>
<feature type="mutagenesis site" description="No protease activity." evidence="2">
    <original>D</original>
    <variation>N</variation>
    <variation>M</variation>
    <location>
        <position position="62"/>
    </location>
</feature>
<feature type="mutagenesis site" description="A little protease activity remaining." evidence="2">
    <original>H</original>
    <variation>Q</variation>
    <location>
        <position position="90"/>
    </location>
</feature>
<feature type="strand" evidence="6">
    <location>
        <begin position="3"/>
        <end position="8"/>
    </location>
</feature>
<feature type="helix" evidence="6">
    <location>
        <begin position="11"/>
        <end position="17"/>
    </location>
</feature>
<feature type="helix" evidence="6">
    <location>
        <begin position="18"/>
        <end position="28"/>
    </location>
</feature>
<feature type="strand" evidence="6">
    <location>
        <begin position="35"/>
        <end position="38"/>
    </location>
</feature>
<feature type="helix" evidence="6">
    <location>
        <begin position="44"/>
        <end position="46"/>
    </location>
</feature>
<feature type="helix" evidence="6">
    <location>
        <begin position="47"/>
        <end position="53"/>
    </location>
</feature>
<feature type="strand" evidence="6">
    <location>
        <begin position="56"/>
        <end position="63"/>
    </location>
</feature>
<feature type="strand" evidence="6">
    <location>
        <begin position="73"/>
        <end position="75"/>
    </location>
</feature>
<feature type="helix" evidence="6">
    <location>
        <begin position="78"/>
        <end position="83"/>
    </location>
</feature>
<feature type="helix" evidence="7">
    <location>
        <begin position="85"/>
        <end position="88"/>
    </location>
</feature>
<feature type="strand" evidence="7">
    <location>
        <begin position="89"/>
        <end position="91"/>
    </location>
</feature>
<feature type="helix" evidence="6">
    <location>
        <begin position="94"/>
        <end position="105"/>
    </location>
</feature>
<feature type="strand" evidence="6">
    <location>
        <begin position="106"/>
        <end position="113"/>
    </location>
</feature>
<feature type="helix" evidence="6">
    <location>
        <begin position="126"/>
        <end position="136"/>
    </location>
</feature>
<feature type="turn" evidence="7">
    <location>
        <begin position="139"/>
        <end position="141"/>
    </location>
</feature>
<feature type="turn" evidence="6">
    <location>
        <begin position="144"/>
        <end position="147"/>
    </location>
</feature>
<keyword id="KW-0002">3D-structure</keyword>
<keyword id="KW-0064">Aspartyl protease</keyword>
<keyword id="KW-0903">Direct protein sequencing</keyword>
<keyword id="KW-0378">Hydrolase</keyword>
<keyword id="KW-0479">Metal-binding</keyword>
<keyword id="KW-0533">Nickel</keyword>
<keyword id="KW-0645">Protease</keyword>
<keyword id="KW-1185">Reference proteome</keyword>
<gene>
    <name type="primary">hycI</name>
    <name type="ordered locus">b2717</name>
    <name type="ordered locus">JW2687</name>
</gene>
<evidence type="ECO:0000250" key="1"/>
<evidence type="ECO:0000269" key="2">
    <source>
    </source>
</evidence>
<evidence type="ECO:0000269" key="3">
    <source>
    </source>
</evidence>
<evidence type="ECO:0000269" key="4">
    <source>
    </source>
</evidence>
<evidence type="ECO:0000305" key="5"/>
<evidence type="ECO:0007829" key="6">
    <source>
        <dbReference type="PDB" id="2E85"/>
    </source>
</evidence>
<evidence type="ECO:0007829" key="7">
    <source>
        <dbReference type="PDB" id="2I8L"/>
    </source>
</evidence>